<sequence length="832" mass="96035">MPATNSDEPLVKFELYQLKKCYYIVSENATATIFRILKITQSEDELSISIEEAAKILFRQKLQLYLEKLENESADGKLILVTKAYAILGLFRFTAGYYLYLCTERKVVAVIGGHNVYHVDKTQFIELNPSRRHNTSVERKCMSSIEKVDLARTFYFSYSYDLSQTIQYGFTHPIPQHQVRDMFVWNWNMLRPILDSVGIDSPWCIPLIHGFVDQAKLSVYGKPIIVTLIARRSRHFAGARFLRRGIRDDGYVANEVETEQIVFDGSASSFPISSTTPGIPCYTSYVQHRGSIPLRWSQEFSNITPKPPIGIDFHDPFYASTALHFDRLFGHYGIPCIVLNLVKSSEKVKRESLLLDEFESAIQYLNQFLKDSQKIQYIAWDMSAASKKKVPVTKTLEQMASDIVKKTGFFCTADRFFPGTFQTGVVRTNCVDCLDRTNAAQFVIGKCVLAAQLRALGVLDSPQLDYESDAVRLLAEMYHGHGDAIALQYGGSLLVNTLDTYRKNNQWSSTSRDLIESVKRFYSNSFVDFQRQEAISLFLGNFTVHGKIVVFGEKRLQALTEKFKNGQLVRRDYRYWWTPVYVNQELRCKNAYCDSIQRKGIKFPANYFDNVYTPNSISSFSEVLLPNLISTLNFAPLSLIPLLRKSFLPLSYNGFGIEAPSLNPFIPRRNQPRDMFKTSAEEENEDEDEDDDKFRRVSLYKWLFNNEERPVHKFIRKRLHQIPVSNKVQPRDQKQPDFKIPNTDINVYKIHFQYNNISGLADNYTLLSKHDRAMYNNYADYSPDKIKEIKEKELNTYNDYFNSAISENPTLKSDRSEKVAFYSAWITDYKST</sequence>
<comment type="function">
    <text evidence="1">The PI(3,5)P2 regulatory complex regulates both the synthesis and turnover of phosphatidylinositol 3,5-bisphosphate (PtdIns(3,5)P2).</text>
</comment>
<comment type="catalytic activity">
    <reaction>
        <text>a 1,2-diacyl-sn-glycero-3-phospho-(1D-myo-inositol-3,5-bisphosphate) + H2O = a 1,2-diacyl-sn-glycero-3-phospho-(1D-myo-inositol-3-phosphate) + phosphate</text>
        <dbReference type="Rhea" id="RHEA:32955"/>
        <dbReference type="ChEBI" id="CHEBI:15377"/>
        <dbReference type="ChEBI" id="CHEBI:43474"/>
        <dbReference type="ChEBI" id="CHEBI:57923"/>
        <dbReference type="ChEBI" id="CHEBI:58088"/>
    </reaction>
</comment>
<comment type="cofactor">
    <cofactor evidence="1">
        <name>Mg(2+)</name>
        <dbReference type="ChEBI" id="CHEBI:18420"/>
    </cofactor>
</comment>
<comment type="subunit">
    <text evidence="1">Component of the PI(3,5)P2 regulatory complex.</text>
</comment>
<comment type="subcellular location">
    <subcellularLocation>
        <location evidence="3">Cytoplasm</location>
    </subcellularLocation>
    <subcellularLocation>
        <location evidence="1">Vacuole membrane</location>
        <topology evidence="1">Peripheral membrane protein</topology>
    </subcellularLocation>
</comment>
<gene>
    <name type="ORF">SPAC1093.03</name>
</gene>
<protein>
    <recommendedName>
        <fullName>Polyphosphoinositide phosphatase</fullName>
        <ecNumber>3.1.3.-</ecNumber>
    </recommendedName>
    <alternativeName>
        <fullName>Phosphatidylinositol 3,5-bisphosphate 5-phosphatase</fullName>
    </alternativeName>
</protein>
<dbReference type="EC" id="3.1.3.-"/>
<dbReference type="EMBL" id="CU329670">
    <property type="protein sequence ID" value="CAB60248.4"/>
    <property type="molecule type" value="Genomic_DNA"/>
</dbReference>
<dbReference type="SMR" id="Q7Z9H9"/>
<dbReference type="BioGRID" id="280477">
    <property type="interactions" value="39"/>
</dbReference>
<dbReference type="FunCoup" id="Q7Z9H9">
    <property type="interactions" value="893"/>
</dbReference>
<dbReference type="STRING" id="284812.Q7Z9H9"/>
<dbReference type="PaxDb" id="4896-SPAC1093.03.1"/>
<dbReference type="EnsemblFungi" id="SPAC1093.03.1">
    <property type="protein sequence ID" value="SPAC1093.03.1:pep"/>
    <property type="gene ID" value="SPAC1093.03"/>
</dbReference>
<dbReference type="KEGG" id="spo:3361401"/>
<dbReference type="PomBase" id="SPAC1093.03"/>
<dbReference type="VEuPathDB" id="FungiDB:SPAC1093.03"/>
<dbReference type="eggNOG" id="KOG1888">
    <property type="taxonomic scope" value="Eukaryota"/>
</dbReference>
<dbReference type="HOGENOM" id="CLU_003016_0_3_1"/>
<dbReference type="InParanoid" id="Q7Z9H9"/>
<dbReference type="OMA" id="KRKCCAH"/>
<dbReference type="PRO" id="PR:Q7Z9H9"/>
<dbReference type="Proteomes" id="UP000002485">
    <property type="component" value="Chromosome I"/>
</dbReference>
<dbReference type="GO" id="GO:0005829">
    <property type="term" value="C:cytosol"/>
    <property type="evidence" value="ECO:0007005"/>
    <property type="project" value="PomBase"/>
</dbReference>
<dbReference type="GO" id="GO:0000329">
    <property type="term" value="C:fungal-type vacuole membrane"/>
    <property type="evidence" value="ECO:0000266"/>
    <property type="project" value="PomBase"/>
</dbReference>
<dbReference type="GO" id="GO:0043231">
    <property type="term" value="C:intracellular membrane-bounded organelle"/>
    <property type="evidence" value="ECO:0000318"/>
    <property type="project" value="GO_Central"/>
</dbReference>
<dbReference type="GO" id="GO:0070772">
    <property type="term" value="C:PAS complex"/>
    <property type="evidence" value="ECO:0000266"/>
    <property type="project" value="PomBase"/>
</dbReference>
<dbReference type="GO" id="GO:0043813">
    <property type="term" value="F:phosphatidylinositol-3,5-bisphosphate 5-phosphatase activity"/>
    <property type="evidence" value="ECO:0000318"/>
    <property type="project" value="GO_Central"/>
</dbReference>
<dbReference type="GO" id="GO:0046856">
    <property type="term" value="P:phosphatidylinositol dephosphorylation"/>
    <property type="evidence" value="ECO:0000318"/>
    <property type="project" value="GO_Central"/>
</dbReference>
<dbReference type="GO" id="GO:0023052">
    <property type="term" value="P:signaling"/>
    <property type="evidence" value="ECO:0000303"/>
    <property type="project" value="PomBase"/>
</dbReference>
<dbReference type="InterPro" id="IPR043573">
    <property type="entry name" value="Fig4-like"/>
</dbReference>
<dbReference type="InterPro" id="IPR002013">
    <property type="entry name" value="SAC_dom"/>
</dbReference>
<dbReference type="PANTHER" id="PTHR45738">
    <property type="entry name" value="POLYPHOSPHOINOSITIDE PHOSPHATASE"/>
    <property type="match status" value="1"/>
</dbReference>
<dbReference type="PANTHER" id="PTHR45738:SF5">
    <property type="entry name" value="POLYPHOSPHOINOSITIDE PHOSPHATASE"/>
    <property type="match status" value="1"/>
</dbReference>
<dbReference type="Pfam" id="PF02383">
    <property type="entry name" value="Syja_N"/>
    <property type="match status" value="1"/>
</dbReference>
<dbReference type="PROSITE" id="PS50275">
    <property type="entry name" value="SAC"/>
    <property type="match status" value="1"/>
</dbReference>
<name>FIG4_SCHPO</name>
<keyword id="KW-0963">Cytoplasm</keyword>
<keyword id="KW-0378">Hydrolase</keyword>
<keyword id="KW-0472">Membrane</keyword>
<keyword id="KW-1185">Reference proteome</keyword>
<keyword id="KW-0926">Vacuole</keyword>
<reference key="1">
    <citation type="journal article" date="2002" name="Nature">
        <title>The genome sequence of Schizosaccharomyces pombe.</title>
        <authorList>
            <person name="Wood V."/>
            <person name="Gwilliam R."/>
            <person name="Rajandream M.A."/>
            <person name="Lyne M.H."/>
            <person name="Lyne R."/>
            <person name="Stewart A."/>
            <person name="Sgouros J.G."/>
            <person name="Peat N."/>
            <person name="Hayles J."/>
            <person name="Baker S.G."/>
            <person name="Basham D."/>
            <person name="Bowman S."/>
            <person name="Brooks K."/>
            <person name="Brown D."/>
            <person name="Brown S."/>
            <person name="Chillingworth T."/>
            <person name="Churcher C.M."/>
            <person name="Collins M."/>
            <person name="Connor R."/>
            <person name="Cronin A."/>
            <person name="Davis P."/>
            <person name="Feltwell T."/>
            <person name="Fraser A."/>
            <person name="Gentles S."/>
            <person name="Goble A."/>
            <person name="Hamlin N."/>
            <person name="Harris D.E."/>
            <person name="Hidalgo J."/>
            <person name="Hodgson G."/>
            <person name="Holroyd S."/>
            <person name="Hornsby T."/>
            <person name="Howarth S."/>
            <person name="Huckle E.J."/>
            <person name="Hunt S."/>
            <person name="Jagels K."/>
            <person name="James K.D."/>
            <person name="Jones L."/>
            <person name="Jones M."/>
            <person name="Leather S."/>
            <person name="McDonald S."/>
            <person name="McLean J."/>
            <person name="Mooney P."/>
            <person name="Moule S."/>
            <person name="Mungall K.L."/>
            <person name="Murphy L.D."/>
            <person name="Niblett D."/>
            <person name="Odell C."/>
            <person name="Oliver K."/>
            <person name="O'Neil S."/>
            <person name="Pearson D."/>
            <person name="Quail M.A."/>
            <person name="Rabbinowitsch E."/>
            <person name="Rutherford K.M."/>
            <person name="Rutter S."/>
            <person name="Saunders D."/>
            <person name="Seeger K."/>
            <person name="Sharp S."/>
            <person name="Skelton J."/>
            <person name="Simmonds M.N."/>
            <person name="Squares R."/>
            <person name="Squares S."/>
            <person name="Stevens K."/>
            <person name="Taylor K."/>
            <person name="Taylor R.G."/>
            <person name="Tivey A."/>
            <person name="Walsh S.V."/>
            <person name="Warren T."/>
            <person name="Whitehead S."/>
            <person name="Woodward J.R."/>
            <person name="Volckaert G."/>
            <person name="Aert R."/>
            <person name="Robben J."/>
            <person name="Grymonprez B."/>
            <person name="Weltjens I."/>
            <person name="Vanstreels E."/>
            <person name="Rieger M."/>
            <person name="Schaefer M."/>
            <person name="Mueller-Auer S."/>
            <person name="Gabel C."/>
            <person name="Fuchs M."/>
            <person name="Duesterhoeft A."/>
            <person name="Fritzc C."/>
            <person name="Holzer E."/>
            <person name="Moestl D."/>
            <person name="Hilbert H."/>
            <person name="Borzym K."/>
            <person name="Langer I."/>
            <person name="Beck A."/>
            <person name="Lehrach H."/>
            <person name="Reinhardt R."/>
            <person name="Pohl T.M."/>
            <person name="Eger P."/>
            <person name="Zimmermann W."/>
            <person name="Wedler H."/>
            <person name="Wambutt R."/>
            <person name="Purnelle B."/>
            <person name="Goffeau A."/>
            <person name="Cadieu E."/>
            <person name="Dreano S."/>
            <person name="Gloux S."/>
            <person name="Lelaure V."/>
            <person name="Mottier S."/>
            <person name="Galibert F."/>
            <person name="Aves S.J."/>
            <person name="Xiang Z."/>
            <person name="Hunt C."/>
            <person name="Moore K."/>
            <person name="Hurst S.M."/>
            <person name="Lucas M."/>
            <person name="Rochet M."/>
            <person name="Gaillardin C."/>
            <person name="Tallada V.A."/>
            <person name="Garzon A."/>
            <person name="Thode G."/>
            <person name="Daga R.R."/>
            <person name="Cruzado L."/>
            <person name="Jimenez J."/>
            <person name="Sanchez M."/>
            <person name="del Rey F."/>
            <person name="Benito J."/>
            <person name="Dominguez A."/>
            <person name="Revuelta J.L."/>
            <person name="Moreno S."/>
            <person name="Armstrong J."/>
            <person name="Forsburg S.L."/>
            <person name="Cerutti L."/>
            <person name="Lowe T."/>
            <person name="McCombie W.R."/>
            <person name="Paulsen I."/>
            <person name="Potashkin J."/>
            <person name="Shpakovski G.V."/>
            <person name="Ussery D."/>
            <person name="Barrell B.G."/>
            <person name="Nurse P."/>
        </authorList>
    </citation>
    <scope>NUCLEOTIDE SEQUENCE [LARGE SCALE GENOMIC DNA]</scope>
    <source>
        <strain>972 / ATCC 24843</strain>
    </source>
</reference>
<reference key="2">
    <citation type="journal article" date="2011" name="Science">
        <title>Comparative functional genomics of the fission yeasts.</title>
        <authorList>
            <person name="Rhind N."/>
            <person name="Chen Z."/>
            <person name="Yassour M."/>
            <person name="Thompson D.A."/>
            <person name="Haas B.J."/>
            <person name="Habib N."/>
            <person name="Wapinski I."/>
            <person name="Roy S."/>
            <person name="Lin M.F."/>
            <person name="Heiman D.I."/>
            <person name="Young S.K."/>
            <person name="Furuya K."/>
            <person name="Guo Y."/>
            <person name="Pidoux A."/>
            <person name="Chen H.M."/>
            <person name="Robbertse B."/>
            <person name="Goldberg J.M."/>
            <person name="Aoki K."/>
            <person name="Bayne E.H."/>
            <person name="Berlin A.M."/>
            <person name="Desjardins C.A."/>
            <person name="Dobbs E."/>
            <person name="Dukaj L."/>
            <person name="Fan L."/>
            <person name="FitzGerald M.G."/>
            <person name="French C."/>
            <person name="Gujja S."/>
            <person name="Hansen K."/>
            <person name="Keifenheim D."/>
            <person name="Levin J.Z."/>
            <person name="Mosher R.A."/>
            <person name="Mueller C.A."/>
            <person name="Pfiffner J."/>
            <person name="Priest M."/>
            <person name="Russ C."/>
            <person name="Smialowska A."/>
            <person name="Swoboda P."/>
            <person name="Sykes S.M."/>
            <person name="Vaughn M."/>
            <person name="Vengrova S."/>
            <person name="Yoder R."/>
            <person name="Zeng Q."/>
            <person name="Allshire R."/>
            <person name="Baulcombe D."/>
            <person name="Birren B.W."/>
            <person name="Brown W."/>
            <person name="Ekwall K."/>
            <person name="Kellis M."/>
            <person name="Leatherwood J."/>
            <person name="Levin H."/>
            <person name="Margalit H."/>
            <person name="Martienssen R."/>
            <person name="Nieduszynski C.A."/>
            <person name="Spatafora J.W."/>
            <person name="Friedman N."/>
            <person name="Dalgaard J.Z."/>
            <person name="Baumann P."/>
            <person name="Niki H."/>
            <person name="Regev A."/>
            <person name="Nusbaum C."/>
        </authorList>
    </citation>
    <scope>REVISION OF GENE MODEL</scope>
</reference>
<reference key="3">
    <citation type="journal article" date="2006" name="Nat. Biotechnol.">
        <title>ORFeome cloning and global analysis of protein localization in the fission yeast Schizosaccharomyces pombe.</title>
        <authorList>
            <person name="Matsuyama A."/>
            <person name="Arai R."/>
            <person name="Yashiroda Y."/>
            <person name="Shirai A."/>
            <person name="Kamata A."/>
            <person name="Sekido S."/>
            <person name="Kobayashi Y."/>
            <person name="Hashimoto A."/>
            <person name="Hamamoto M."/>
            <person name="Hiraoka Y."/>
            <person name="Horinouchi S."/>
            <person name="Yoshida M."/>
        </authorList>
    </citation>
    <scope>SUBCELLULAR LOCATION [LARGE SCALE ANALYSIS]</scope>
</reference>
<evidence type="ECO:0000250" key="1"/>
<evidence type="ECO:0000255" key="2">
    <source>
        <dbReference type="PROSITE-ProRule" id="PRU00183"/>
    </source>
</evidence>
<evidence type="ECO:0000269" key="3">
    <source>
    </source>
</evidence>
<accession>Q7Z9H9</accession>
<proteinExistence type="inferred from homology"/>
<feature type="chain" id="PRO_0000317231" description="Polyphosphoinositide phosphatase">
    <location>
        <begin position="1"/>
        <end position="832"/>
    </location>
</feature>
<feature type="domain" description="SAC" evidence="2">
    <location>
        <begin position="145"/>
        <end position="491"/>
    </location>
</feature>
<organism>
    <name type="scientific">Schizosaccharomyces pombe (strain 972 / ATCC 24843)</name>
    <name type="common">Fission yeast</name>
    <dbReference type="NCBI Taxonomy" id="284812"/>
    <lineage>
        <taxon>Eukaryota</taxon>
        <taxon>Fungi</taxon>
        <taxon>Dikarya</taxon>
        <taxon>Ascomycota</taxon>
        <taxon>Taphrinomycotina</taxon>
        <taxon>Schizosaccharomycetes</taxon>
        <taxon>Schizosaccharomycetales</taxon>
        <taxon>Schizosaccharomycetaceae</taxon>
        <taxon>Schizosaccharomyces</taxon>
    </lineage>
</organism>